<organism>
    <name type="scientific">Photorhabdus laumondii subsp. laumondii (strain DSM 15139 / CIP 105565 / TT01)</name>
    <name type="common">Photorhabdus luminescens subsp. laumondii</name>
    <dbReference type="NCBI Taxonomy" id="243265"/>
    <lineage>
        <taxon>Bacteria</taxon>
        <taxon>Pseudomonadati</taxon>
        <taxon>Pseudomonadota</taxon>
        <taxon>Gammaproteobacteria</taxon>
        <taxon>Enterobacterales</taxon>
        <taxon>Morganellaceae</taxon>
        <taxon>Photorhabdus</taxon>
    </lineage>
</organism>
<name>NFUA_PHOLL</name>
<comment type="function">
    <text evidence="1">Involved in iron-sulfur cluster biogenesis. Binds a 4Fe-4S cluster, can transfer this cluster to apoproteins, and thereby intervenes in the maturation of Fe/S proteins. Could also act as a scaffold/chaperone for damaged Fe/S proteins.</text>
</comment>
<comment type="cofactor">
    <cofactor evidence="1">
        <name>[4Fe-4S] cluster</name>
        <dbReference type="ChEBI" id="CHEBI:49883"/>
    </cofactor>
    <text evidence="1">Binds 1 [4Fe-4S] cluster per subunit. The cluster is presumably bound at the interface of two monomers.</text>
</comment>
<comment type="subunit">
    <text evidence="1">Homodimer.</text>
</comment>
<comment type="similarity">
    <text evidence="1">Belongs to the NfuA family.</text>
</comment>
<reference key="1">
    <citation type="journal article" date="2003" name="Nat. Biotechnol.">
        <title>The genome sequence of the entomopathogenic bacterium Photorhabdus luminescens.</title>
        <authorList>
            <person name="Duchaud E."/>
            <person name="Rusniok C."/>
            <person name="Frangeul L."/>
            <person name="Buchrieser C."/>
            <person name="Givaudan A."/>
            <person name="Taourit S."/>
            <person name="Bocs S."/>
            <person name="Boursaux-Eude C."/>
            <person name="Chandler M."/>
            <person name="Charles J.-F."/>
            <person name="Dassa E."/>
            <person name="Derose R."/>
            <person name="Derzelle S."/>
            <person name="Freyssinet G."/>
            <person name="Gaudriault S."/>
            <person name="Medigue C."/>
            <person name="Lanois A."/>
            <person name="Powell K."/>
            <person name="Siguier P."/>
            <person name="Vincent R."/>
            <person name="Wingate V."/>
            <person name="Zouine M."/>
            <person name="Glaser P."/>
            <person name="Boemare N."/>
            <person name="Danchin A."/>
            <person name="Kunst F."/>
        </authorList>
    </citation>
    <scope>NUCLEOTIDE SEQUENCE [LARGE SCALE GENOMIC DNA]</scope>
    <source>
        <strain>DSM 15139 / CIP 105565 / TT01</strain>
    </source>
</reference>
<proteinExistence type="inferred from homology"/>
<accession>Q7N9W2</accession>
<evidence type="ECO:0000255" key="1">
    <source>
        <dbReference type="HAMAP-Rule" id="MF_01637"/>
    </source>
</evidence>
<gene>
    <name evidence="1" type="primary">nfuA</name>
    <name type="ordered locus">plu0198</name>
</gene>
<protein>
    <recommendedName>
        <fullName evidence="1">Fe/S biogenesis protein NfuA</fullName>
    </recommendedName>
</protein>
<sequence>MINITEAAQTHFAKLLANQEPGTQIRVFVINPGTPTAECGVSYCPPDAVEATDTELKFDQLSAYVDELSAPFLEEAEIDFVTDQLGSQLTLKAPNAKMRKVSDDSPLAERVEYVLQSQINPQLAGHGGRVSLMEITDDGFAILQFGGGCNGCSMVDVTLKEGIEKELLNMFPELKGVKDLTEHQRGEHSYY</sequence>
<dbReference type="EMBL" id="BX571859">
    <property type="protein sequence ID" value="CAE12493.1"/>
    <property type="molecule type" value="Genomic_DNA"/>
</dbReference>
<dbReference type="RefSeq" id="WP_011144599.1">
    <property type="nucleotide sequence ID" value="NC_005126.1"/>
</dbReference>
<dbReference type="SMR" id="Q7N9W2"/>
<dbReference type="STRING" id="243265.plu0198"/>
<dbReference type="GeneID" id="48846494"/>
<dbReference type="KEGG" id="plu:plu0198"/>
<dbReference type="eggNOG" id="COG0316">
    <property type="taxonomic scope" value="Bacteria"/>
</dbReference>
<dbReference type="eggNOG" id="COG0694">
    <property type="taxonomic scope" value="Bacteria"/>
</dbReference>
<dbReference type="HOGENOM" id="CLU_094569_0_0_6"/>
<dbReference type="OrthoDB" id="9785450at2"/>
<dbReference type="Proteomes" id="UP000002514">
    <property type="component" value="Chromosome"/>
</dbReference>
<dbReference type="GO" id="GO:0051539">
    <property type="term" value="F:4 iron, 4 sulfur cluster binding"/>
    <property type="evidence" value="ECO:0007669"/>
    <property type="project" value="UniProtKB-UniRule"/>
</dbReference>
<dbReference type="GO" id="GO:0005506">
    <property type="term" value="F:iron ion binding"/>
    <property type="evidence" value="ECO:0007669"/>
    <property type="project" value="InterPro"/>
</dbReference>
<dbReference type="GO" id="GO:0016226">
    <property type="term" value="P:iron-sulfur cluster assembly"/>
    <property type="evidence" value="ECO:0007669"/>
    <property type="project" value="UniProtKB-UniRule"/>
</dbReference>
<dbReference type="GO" id="GO:0051604">
    <property type="term" value="P:protein maturation"/>
    <property type="evidence" value="ECO:0007669"/>
    <property type="project" value="UniProtKB-UniRule"/>
</dbReference>
<dbReference type="FunFam" id="3.30.300.130:FF:000002">
    <property type="entry name" value="Fe/S biogenesis protein NfuA"/>
    <property type="match status" value="1"/>
</dbReference>
<dbReference type="Gene3D" id="3.30.300.130">
    <property type="entry name" value="Fe-S cluster assembly (FSCA)"/>
    <property type="match status" value="1"/>
</dbReference>
<dbReference type="Gene3D" id="2.60.300.12">
    <property type="entry name" value="HesB-like domain"/>
    <property type="match status" value="1"/>
</dbReference>
<dbReference type="HAMAP" id="MF_01637">
    <property type="entry name" value="Fe_S_biogen_NfuA"/>
    <property type="match status" value="1"/>
</dbReference>
<dbReference type="InterPro" id="IPR017726">
    <property type="entry name" value="Fe/S_biogenesis_protein_NfuA"/>
</dbReference>
<dbReference type="InterPro" id="IPR000361">
    <property type="entry name" value="FeS_biogenesis"/>
</dbReference>
<dbReference type="InterPro" id="IPR034904">
    <property type="entry name" value="FSCA_dom_sf"/>
</dbReference>
<dbReference type="InterPro" id="IPR035903">
    <property type="entry name" value="HesB-like_dom_sf"/>
</dbReference>
<dbReference type="InterPro" id="IPR001075">
    <property type="entry name" value="NIF_FeS_clus_asmbl_NifU_C"/>
</dbReference>
<dbReference type="NCBIfam" id="NF008392">
    <property type="entry name" value="PRK11190.1"/>
    <property type="match status" value="1"/>
</dbReference>
<dbReference type="NCBIfam" id="TIGR03341">
    <property type="entry name" value="YhgI_GntY"/>
    <property type="match status" value="1"/>
</dbReference>
<dbReference type="PANTHER" id="PTHR11178:SF51">
    <property type="entry name" value="FE_S BIOGENESIS PROTEIN NFUA"/>
    <property type="match status" value="1"/>
</dbReference>
<dbReference type="PANTHER" id="PTHR11178">
    <property type="entry name" value="IRON-SULFUR CLUSTER SCAFFOLD PROTEIN NFU-RELATED"/>
    <property type="match status" value="1"/>
</dbReference>
<dbReference type="Pfam" id="PF01521">
    <property type="entry name" value="Fe-S_biosyn"/>
    <property type="match status" value="1"/>
</dbReference>
<dbReference type="Pfam" id="PF01106">
    <property type="entry name" value="NifU"/>
    <property type="match status" value="1"/>
</dbReference>
<dbReference type="SUPFAM" id="SSF117916">
    <property type="entry name" value="Fe-S cluster assembly (FSCA) domain-like"/>
    <property type="match status" value="1"/>
</dbReference>
<dbReference type="SUPFAM" id="SSF89360">
    <property type="entry name" value="HesB-like domain"/>
    <property type="match status" value="1"/>
</dbReference>
<keyword id="KW-0004">4Fe-4S</keyword>
<keyword id="KW-0408">Iron</keyword>
<keyword id="KW-0411">Iron-sulfur</keyword>
<keyword id="KW-0479">Metal-binding</keyword>
<keyword id="KW-1185">Reference proteome</keyword>
<feature type="chain" id="PRO_0000209479" description="Fe/S biogenesis protein NfuA">
    <location>
        <begin position="1"/>
        <end position="191"/>
    </location>
</feature>
<feature type="binding site" evidence="1">
    <location>
        <position position="149"/>
    </location>
    <ligand>
        <name>[4Fe-4S] cluster</name>
        <dbReference type="ChEBI" id="CHEBI:49883"/>
    </ligand>
</feature>
<feature type="binding site" evidence="1">
    <location>
        <position position="152"/>
    </location>
    <ligand>
        <name>[4Fe-4S] cluster</name>
        <dbReference type="ChEBI" id="CHEBI:49883"/>
    </ligand>
</feature>